<evidence type="ECO:0000250" key="1"/>
<evidence type="ECO:0000305" key="2"/>
<reference key="1">
    <citation type="submission" date="2003-03" db="EMBL/GenBank/DDBJ databases">
        <title>African swine fever virus genomes.</title>
        <authorList>
            <person name="Kutish G.F."/>
            <person name="Rock D.L."/>
        </authorList>
    </citation>
    <scope>NUCLEOTIDE SEQUENCE [LARGE SCALE GENOMIC DNA]</scope>
</reference>
<accession>P0C9M0</accession>
<comment type="function">
    <text evidence="1">Plays a role in virus cell tropism, and may be required for efficient virus replication in macrophages.</text>
</comment>
<comment type="similarity">
    <text evidence="2">Belongs to the asfivirus MGF 360 family.</text>
</comment>
<feature type="chain" id="PRO_0000373246" description="Protein MGF 360-1L">
    <location>
        <begin position="1"/>
        <end position="356"/>
    </location>
</feature>
<gene>
    <name type="ordered locus">Pret-002</name>
</gene>
<sequence length="356" mass="41802">MQPSTLQTLTKKALATQHVSKDDYYILERCGLWWHEAPISMYIDDDNQIIIKTLCYKEGIKLNTALVLAVKENNDDLIMLFTEWGANINYGLLFINNEHTRNLCRKLGAKEELETSEILRFFFETKHKITSSNIILCHELFSNNPFLQNVNMVDLRTIIYWELKDLTTNSMLNEIPFSEMLTKYWYGIAVKYNLKEAIQYFCQEYRHFDEWRLICALSFNNVFDLHEICNTTKVHMSINKMMELACMRDNNFLTIYYCFALGANVNRAMLISVKNFRIENMFFCMDLGANVIEHSKTLADIYGYSIIVNILSLKIYKANPILLSKETNPEKINTLLKNYYSKNMLAYDICCIDNYL</sequence>
<protein>
    <recommendedName>
        <fullName>Protein MGF 360-1L</fullName>
    </recommendedName>
</protein>
<proteinExistence type="inferred from homology"/>
<dbReference type="EMBL" id="AY261363">
    <property type="status" value="NOT_ANNOTATED_CDS"/>
    <property type="molecule type" value="Genomic_DNA"/>
</dbReference>
<dbReference type="SMR" id="P0C9M0"/>
<dbReference type="Proteomes" id="UP000000859">
    <property type="component" value="Segment"/>
</dbReference>
<dbReference type="GO" id="GO:0042330">
    <property type="term" value="P:taxis"/>
    <property type="evidence" value="ECO:0007669"/>
    <property type="project" value="InterPro"/>
</dbReference>
<dbReference type="InterPro" id="IPR002595">
    <property type="entry name" value="ASFV_MGF360"/>
</dbReference>
<dbReference type="Pfam" id="PF01671">
    <property type="entry name" value="ASFV_360"/>
    <property type="match status" value="1"/>
</dbReference>
<organism>
    <name type="scientific">African swine fever virus (isolate Tick/South Africa/Pretoriuskop Pr4/1996)</name>
    <name type="common">ASFV</name>
    <dbReference type="NCBI Taxonomy" id="561443"/>
    <lineage>
        <taxon>Viruses</taxon>
        <taxon>Varidnaviria</taxon>
        <taxon>Bamfordvirae</taxon>
        <taxon>Nucleocytoviricota</taxon>
        <taxon>Pokkesviricetes</taxon>
        <taxon>Asfuvirales</taxon>
        <taxon>Asfarviridae</taxon>
        <taxon>Asfivirus</taxon>
        <taxon>African swine fever virus</taxon>
    </lineage>
</organism>
<name>3601L_ASFP4</name>
<organismHost>
    <name type="scientific">Ornithodoros</name>
    <name type="common">relapsing fever ticks</name>
    <dbReference type="NCBI Taxonomy" id="6937"/>
</organismHost>
<organismHost>
    <name type="scientific">Phacochoerus aethiopicus</name>
    <name type="common">Warthog</name>
    <dbReference type="NCBI Taxonomy" id="85517"/>
</organismHost>
<organismHost>
    <name type="scientific">Phacochoerus africanus</name>
    <name type="common">Warthog</name>
    <dbReference type="NCBI Taxonomy" id="41426"/>
</organismHost>
<organismHost>
    <name type="scientific">Potamochoerus larvatus</name>
    <name type="common">Bushpig</name>
    <dbReference type="NCBI Taxonomy" id="273792"/>
</organismHost>
<organismHost>
    <name type="scientific">Sus scrofa</name>
    <name type="common">Pig</name>
    <dbReference type="NCBI Taxonomy" id="9823"/>
</organismHost>